<name>Y3162_PSESM</name>
<evidence type="ECO:0000255" key="1">
    <source>
        <dbReference type="HAMAP-Rule" id="MF_00693"/>
    </source>
</evidence>
<gene>
    <name type="ordered locus">PSPTO_3162</name>
</gene>
<keyword id="KW-0963">Cytoplasm</keyword>
<keyword id="KW-0238">DNA-binding</keyword>
<keyword id="KW-1185">Reference proteome</keyword>
<keyword id="KW-0804">Transcription</keyword>
<keyword id="KW-0805">Transcription regulation</keyword>
<feature type="chain" id="PRO_0000175871" description="Probable transcriptional regulatory protein PSPTO_3162">
    <location>
        <begin position="1"/>
        <end position="234"/>
    </location>
</feature>
<protein>
    <recommendedName>
        <fullName evidence="1">Probable transcriptional regulatory protein PSPTO_3162</fullName>
    </recommendedName>
</protein>
<comment type="subcellular location">
    <subcellularLocation>
        <location evidence="1">Cytoplasm</location>
    </subcellularLocation>
</comment>
<comment type="similarity">
    <text evidence="1">Belongs to the TACO1 family.</text>
</comment>
<proteinExistence type="inferred from homology"/>
<sequence>MGAQWKVKHKEAAANAKGRTFGKLSKEIMIAARAGADPDMNSRLRLVVEQAKKASMPRETLERAIKKGAGLLGESVNFERLTYEGFAPHRVPVIVECLTDNINRTVSEIRVLFRKGQLGAAGSVSWDFLYQGMIEAVPTAPDADADEAAIEAGAQDCEPGEEGATLFLTEPTDMDAVCKALPQFGFAVQSAQLGYRPKSTVDGLSDEQMAEVEAFLEAIDNHDDVQNVYVGLAG</sequence>
<dbReference type="EMBL" id="AE016853">
    <property type="protein sequence ID" value="AAO56647.1"/>
    <property type="molecule type" value="Genomic_DNA"/>
</dbReference>
<dbReference type="RefSeq" id="NP_792952.1">
    <property type="nucleotide sequence ID" value="NC_004578.1"/>
</dbReference>
<dbReference type="RefSeq" id="WP_005766298.1">
    <property type="nucleotide sequence ID" value="NC_004578.1"/>
</dbReference>
<dbReference type="SMR" id="Q880J5"/>
<dbReference type="STRING" id="223283.PSPTO_3162"/>
<dbReference type="GeneID" id="1184819"/>
<dbReference type="KEGG" id="pst:PSPTO_3162"/>
<dbReference type="PATRIC" id="fig|223283.9.peg.3229"/>
<dbReference type="eggNOG" id="COG0217">
    <property type="taxonomic scope" value="Bacteria"/>
</dbReference>
<dbReference type="HOGENOM" id="CLU_062974_2_2_6"/>
<dbReference type="OrthoDB" id="9781053at2"/>
<dbReference type="PhylomeDB" id="Q880J5"/>
<dbReference type="Proteomes" id="UP000002515">
    <property type="component" value="Chromosome"/>
</dbReference>
<dbReference type="GO" id="GO:0005737">
    <property type="term" value="C:cytoplasm"/>
    <property type="evidence" value="ECO:0007669"/>
    <property type="project" value="UniProtKB-SubCell"/>
</dbReference>
<dbReference type="GO" id="GO:0003677">
    <property type="term" value="F:DNA binding"/>
    <property type="evidence" value="ECO:0007669"/>
    <property type="project" value="UniProtKB-UniRule"/>
</dbReference>
<dbReference type="GO" id="GO:0006355">
    <property type="term" value="P:regulation of DNA-templated transcription"/>
    <property type="evidence" value="ECO:0007669"/>
    <property type="project" value="UniProtKB-UniRule"/>
</dbReference>
<dbReference type="Gene3D" id="1.10.10.200">
    <property type="match status" value="1"/>
</dbReference>
<dbReference type="Gene3D" id="3.30.70.980">
    <property type="match status" value="2"/>
</dbReference>
<dbReference type="HAMAP" id="MF_00693">
    <property type="entry name" value="Transcrip_reg_TACO1"/>
    <property type="match status" value="1"/>
</dbReference>
<dbReference type="InterPro" id="IPR017856">
    <property type="entry name" value="Integrase-like_N"/>
</dbReference>
<dbReference type="InterPro" id="IPR048300">
    <property type="entry name" value="TACO1_YebC-like_2nd/3rd_dom"/>
</dbReference>
<dbReference type="InterPro" id="IPR049083">
    <property type="entry name" value="TACO1_YebC_N"/>
</dbReference>
<dbReference type="InterPro" id="IPR002876">
    <property type="entry name" value="Transcrip_reg_TACO1-like"/>
</dbReference>
<dbReference type="InterPro" id="IPR026564">
    <property type="entry name" value="Transcrip_reg_TACO1-like_dom3"/>
</dbReference>
<dbReference type="InterPro" id="IPR029072">
    <property type="entry name" value="YebC-like"/>
</dbReference>
<dbReference type="NCBIfam" id="NF009044">
    <property type="entry name" value="PRK12378.1"/>
    <property type="match status" value="1"/>
</dbReference>
<dbReference type="PANTHER" id="PTHR12532">
    <property type="entry name" value="TRANSLATIONAL ACTIVATOR OF CYTOCHROME C OXIDASE 1"/>
    <property type="match status" value="1"/>
</dbReference>
<dbReference type="PANTHER" id="PTHR12532:SF0">
    <property type="entry name" value="TRANSLATIONAL ACTIVATOR OF CYTOCHROME C OXIDASE 1"/>
    <property type="match status" value="1"/>
</dbReference>
<dbReference type="Pfam" id="PF20772">
    <property type="entry name" value="TACO1_YebC_N"/>
    <property type="match status" value="1"/>
</dbReference>
<dbReference type="Pfam" id="PF01709">
    <property type="entry name" value="Transcrip_reg"/>
    <property type="match status" value="1"/>
</dbReference>
<dbReference type="SUPFAM" id="SSF75625">
    <property type="entry name" value="YebC-like"/>
    <property type="match status" value="1"/>
</dbReference>
<accession>Q880J5</accession>
<organism>
    <name type="scientific">Pseudomonas syringae pv. tomato (strain ATCC BAA-871 / DC3000)</name>
    <dbReference type="NCBI Taxonomy" id="223283"/>
    <lineage>
        <taxon>Bacteria</taxon>
        <taxon>Pseudomonadati</taxon>
        <taxon>Pseudomonadota</taxon>
        <taxon>Gammaproteobacteria</taxon>
        <taxon>Pseudomonadales</taxon>
        <taxon>Pseudomonadaceae</taxon>
        <taxon>Pseudomonas</taxon>
    </lineage>
</organism>
<reference key="1">
    <citation type="journal article" date="2003" name="Proc. Natl. Acad. Sci. U.S.A.">
        <title>The complete genome sequence of the Arabidopsis and tomato pathogen Pseudomonas syringae pv. tomato DC3000.</title>
        <authorList>
            <person name="Buell C.R."/>
            <person name="Joardar V."/>
            <person name="Lindeberg M."/>
            <person name="Selengut J."/>
            <person name="Paulsen I.T."/>
            <person name="Gwinn M.L."/>
            <person name="Dodson R.J."/>
            <person name="DeBoy R.T."/>
            <person name="Durkin A.S."/>
            <person name="Kolonay J.F."/>
            <person name="Madupu R."/>
            <person name="Daugherty S.C."/>
            <person name="Brinkac L.M."/>
            <person name="Beanan M.J."/>
            <person name="Haft D.H."/>
            <person name="Nelson W.C."/>
            <person name="Davidsen T.M."/>
            <person name="Zafar N."/>
            <person name="Zhou L."/>
            <person name="Liu J."/>
            <person name="Yuan Q."/>
            <person name="Khouri H.M."/>
            <person name="Fedorova N.B."/>
            <person name="Tran B."/>
            <person name="Russell D."/>
            <person name="Berry K.J."/>
            <person name="Utterback T.R."/>
            <person name="Van Aken S.E."/>
            <person name="Feldblyum T.V."/>
            <person name="D'Ascenzo M."/>
            <person name="Deng W.-L."/>
            <person name="Ramos A.R."/>
            <person name="Alfano J.R."/>
            <person name="Cartinhour S."/>
            <person name="Chatterjee A.K."/>
            <person name="Delaney T.P."/>
            <person name="Lazarowitz S.G."/>
            <person name="Martin G.B."/>
            <person name="Schneider D.J."/>
            <person name="Tang X."/>
            <person name="Bender C.L."/>
            <person name="White O."/>
            <person name="Fraser C.M."/>
            <person name="Collmer A."/>
        </authorList>
    </citation>
    <scope>NUCLEOTIDE SEQUENCE [LARGE SCALE GENOMIC DNA]</scope>
    <source>
        <strain>ATCC BAA-871 / DC3000</strain>
    </source>
</reference>